<dbReference type="EMBL" id="U14003">
    <property type="protein sequence ID" value="AAA97021.1"/>
    <property type="molecule type" value="Genomic_DNA"/>
</dbReference>
<dbReference type="EMBL" id="U00096">
    <property type="protein sequence ID" value="AAC77082.1"/>
    <property type="molecule type" value="Genomic_DNA"/>
</dbReference>
<dbReference type="EMBL" id="AP009048">
    <property type="protein sequence ID" value="BAE78123.1"/>
    <property type="molecule type" value="Genomic_DNA"/>
</dbReference>
<dbReference type="EMBL" id="M27058">
    <property type="status" value="NOT_ANNOTATED_CDS"/>
    <property type="molecule type" value="Genomic_DNA"/>
</dbReference>
<dbReference type="PIR" id="S56350">
    <property type="entry name" value="S56350"/>
</dbReference>
<dbReference type="RefSeq" id="NP_418545.1">
    <property type="nucleotide sequence ID" value="NC_000913.3"/>
</dbReference>
<dbReference type="RefSeq" id="WP_000198773.1">
    <property type="nucleotide sequence ID" value="NZ_SSZK01000018.1"/>
</dbReference>
<dbReference type="BioGRID" id="4262151">
    <property type="interactions" value="10"/>
</dbReference>
<dbReference type="FunCoup" id="P39270">
    <property type="interactions" value="17"/>
</dbReference>
<dbReference type="STRING" id="511145.b4121"/>
<dbReference type="PaxDb" id="511145-b4121"/>
<dbReference type="EnsemblBacteria" id="AAC77082">
    <property type="protein sequence ID" value="AAC77082"/>
    <property type="gene ID" value="b4121"/>
</dbReference>
<dbReference type="GeneID" id="948634"/>
<dbReference type="KEGG" id="ecj:JW4082"/>
<dbReference type="KEGG" id="eco:b4121"/>
<dbReference type="KEGG" id="ecoc:C3026_22270"/>
<dbReference type="PATRIC" id="fig|1411691.4.peg.2579"/>
<dbReference type="EchoBASE" id="EB2356"/>
<dbReference type="eggNOG" id="COG3647">
    <property type="taxonomic scope" value="Bacteria"/>
</dbReference>
<dbReference type="HOGENOM" id="CLU_087528_0_0_6"/>
<dbReference type="InParanoid" id="P39270"/>
<dbReference type="OMA" id="GGHYTYA"/>
<dbReference type="OrthoDB" id="9786473at2"/>
<dbReference type="PhylomeDB" id="P39270"/>
<dbReference type="BioCyc" id="EcoCyc:G7825-MONOMER"/>
<dbReference type="PRO" id="PR:P39270"/>
<dbReference type="Proteomes" id="UP000000625">
    <property type="component" value="Chromosome"/>
</dbReference>
<dbReference type="GO" id="GO:0005886">
    <property type="term" value="C:plasma membrane"/>
    <property type="evidence" value="ECO:0000314"/>
    <property type="project" value="EcoCyc"/>
</dbReference>
<dbReference type="InterPro" id="IPR014509">
    <property type="entry name" value="UCP020606"/>
</dbReference>
<dbReference type="NCBIfam" id="NF007369">
    <property type="entry name" value="PRK09867.1"/>
    <property type="match status" value="1"/>
</dbReference>
<dbReference type="Pfam" id="PF09997">
    <property type="entry name" value="DUF2238"/>
    <property type="match status" value="1"/>
</dbReference>
<dbReference type="PIRSF" id="PIRSF020606">
    <property type="entry name" value="UCP020606"/>
    <property type="match status" value="1"/>
</dbReference>
<feature type="chain" id="PRO_0000169729" description="Inner membrane protein YjdF">
    <location>
        <begin position="1"/>
        <end position="209"/>
    </location>
</feature>
<feature type="topological domain" description="Periplasmic" evidence="1">
    <location>
        <begin position="1"/>
        <end position="7"/>
    </location>
</feature>
<feature type="transmembrane region" description="Helical" evidence="1">
    <location>
        <begin position="8"/>
        <end position="28"/>
    </location>
</feature>
<feature type="topological domain" description="Cytoplasmic" evidence="1">
    <location>
        <begin position="29"/>
        <end position="31"/>
    </location>
</feature>
<feature type="transmembrane region" description="Helical" evidence="1">
    <location>
        <begin position="32"/>
        <end position="52"/>
    </location>
</feature>
<feature type="topological domain" description="Periplasmic" evidence="1">
    <location>
        <begin position="53"/>
        <end position="55"/>
    </location>
</feature>
<feature type="transmembrane region" description="Helical" evidence="1">
    <location>
        <begin position="56"/>
        <end position="76"/>
    </location>
</feature>
<feature type="topological domain" description="Cytoplasmic" evidence="1">
    <location>
        <begin position="77"/>
        <end position="131"/>
    </location>
</feature>
<feature type="transmembrane region" description="Helical" evidence="1">
    <location>
        <begin position="132"/>
        <end position="152"/>
    </location>
</feature>
<feature type="topological domain" description="Periplasmic" evidence="1">
    <location>
        <begin position="153"/>
        <end position="177"/>
    </location>
</feature>
<feature type="transmembrane region" description="Helical" evidence="1">
    <location>
        <begin position="178"/>
        <end position="198"/>
    </location>
</feature>
<feature type="topological domain" description="Cytoplasmic" evidence="1">
    <location>
        <begin position="199"/>
        <end position="209"/>
    </location>
</feature>
<evidence type="ECO:0000255" key="1"/>
<accession>P39270</accession>
<accession>Q2M6I3</accession>
<proteinExistence type="evidence at protein level"/>
<gene>
    <name type="primary">yjdF</name>
    <name type="ordered locus">b4121</name>
    <name type="ordered locus">JW4082</name>
</gene>
<comment type="subcellular location">
    <subcellularLocation>
        <location>Cell inner membrane</location>
        <topology>Multi-pass membrane protein</topology>
    </subcellularLocation>
</comment>
<organism>
    <name type="scientific">Escherichia coli (strain K12)</name>
    <dbReference type="NCBI Taxonomy" id="83333"/>
    <lineage>
        <taxon>Bacteria</taxon>
        <taxon>Pseudomonadati</taxon>
        <taxon>Pseudomonadota</taxon>
        <taxon>Gammaproteobacteria</taxon>
        <taxon>Enterobacterales</taxon>
        <taxon>Enterobacteriaceae</taxon>
        <taxon>Escherichia</taxon>
    </lineage>
</organism>
<keyword id="KW-0997">Cell inner membrane</keyword>
<keyword id="KW-1003">Cell membrane</keyword>
<keyword id="KW-0472">Membrane</keyword>
<keyword id="KW-1185">Reference proteome</keyword>
<keyword id="KW-0812">Transmembrane</keyword>
<keyword id="KW-1133">Transmembrane helix</keyword>
<reference key="1">
    <citation type="journal article" date="1995" name="Nucleic Acids Res.">
        <title>Analysis of the Escherichia coli genome VI: DNA sequence of the region from 92.8 through 100 minutes.</title>
        <authorList>
            <person name="Burland V.D."/>
            <person name="Plunkett G. III"/>
            <person name="Sofia H.J."/>
            <person name="Daniels D.L."/>
            <person name="Blattner F.R."/>
        </authorList>
    </citation>
    <scope>NUCLEOTIDE SEQUENCE [LARGE SCALE GENOMIC DNA]</scope>
    <source>
        <strain>K12 / MG1655 / ATCC 47076</strain>
    </source>
</reference>
<reference key="2">
    <citation type="journal article" date="1997" name="Science">
        <title>The complete genome sequence of Escherichia coli K-12.</title>
        <authorList>
            <person name="Blattner F.R."/>
            <person name="Plunkett G. III"/>
            <person name="Bloch C.A."/>
            <person name="Perna N.T."/>
            <person name="Burland V."/>
            <person name="Riley M."/>
            <person name="Collado-Vides J."/>
            <person name="Glasner J.D."/>
            <person name="Rode C.K."/>
            <person name="Mayhew G.F."/>
            <person name="Gregor J."/>
            <person name="Davis N.W."/>
            <person name="Kirkpatrick H.A."/>
            <person name="Goeden M.A."/>
            <person name="Rose D.J."/>
            <person name="Mau B."/>
            <person name="Shao Y."/>
        </authorList>
    </citation>
    <scope>NUCLEOTIDE SEQUENCE [LARGE SCALE GENOMIC DNA]</scope>
    <source>
        <strain>K12 / MG1655 / ATCC 47076</strain>
    </source>
</reference>
<reference key="3">
    <citation type="journal article" date="2006" name="Mol. Syst. Biol.">
        <title>Highly accurate genome sequences of Escherichia coli K-12 strains MG1655 and W3110.</title>
        <authorList>
            <person name="Hayashi K."/>
            <person name="Morooka N."/>
            <person name="Yamamoto Y."/>
            <person name="Fujita K."/>
            <person name="Isono K."/>
            <person name="Choi S."/>
            <person name="Ohtsubo E."/>
            <person name="Baba T."/>
            <person name="Wanner B.L."/>
            <person name="Mori H."/>
            <person name="Horiuchi T."/>
        </authorList>
    </citation>
    <scope>NUCLEOTIDE SEQUENCE [LARGE SCALE GENOMIC DNA]</scope>
    <source>
        <strain>K12 / W3110 / ATCC 27325 / DSM 5911</strain>
    </source>
</reference>
<reference key="4">
    <citation type="journal article" date="1989" name="J. Bacteriol.">
        <title>Nucleotide sequence of the FNR-regulated fumarase gene (fumB) of Escherichia coli K-12.</title>
        <authorList>
            <person name="Bell P.J."/>
            <person name="Andrews S.C."/>
            <person name="Sivak M.N."/>
            <person name="Guest J.R."/>
        </authorList>
    </citation>
    <scope>PRELIMINARY NUCLEOTIDE SEQUENCE [GENOMIC DNA] OF 1-57</scope>
    <source>
        <strain>K12</strain>
    </source>
</reference>
<reference key="5">
    <citation type="journal article" date="2005" name="Science">
        <title>Global topology analysis of the Escherichia coli inner membrane proteome.</title>
        <authorList>
            <person name="Daley D.O."/>
            <person name="Rapp M."/>
            <person name="Granseth E."/>
            <person name="Melen K."/>
            <person name="Drew D."/>
            <person name="von Heijne G."/>
        </authorList>
    </citation>
    <scope>TOPOLOGY [LARGE SCALE ANALYSIS]</scope>
    <source>
        <strain>K12 / MG1655 / ATCC 47076</strain>
    </source>
</reference>
<name>YJDF_ECOLI</name>
<sequence length="209" mass="23442">MTRTLKPLILNTSALTLTLILIYTGISAHDKLTWLMEVTPVIIVVQLLLATARRYPLTPLLYTLIFLHAIILMVGGQYTYAKVPVGFEVQEWLGLSRNPYDKLGHFFQGLVPALVAREILVRGMYVRGRKMVAFLVCCVALAISAMYELIEWWAALAMGQGADDFLGTQGDQWDTQSDMFCALLGALTTVIFLARFHCRQLRRFGLITG</sequence>
<protein>
    <recommendedName>
        <fullName>Inner membrane protein YjdF</fullName>
    </recommendedName>
</protein>